<protein>
    <recommendedName>
        <fullName evidence="1">Pantothenate kinase</fullName>
        <ecNumber evidence="1">2.7.1.33</ecNumber>
    </recommendedName>
    <alternativeName>
        <fullName evidence="1">Pantothenic acid kinase</fullName>
    </alternativeName>
</protein>
<accession>A8AX56</accession>
<evidence type="ECO:0000255" key="1">
    <source>
        <dbReference type="HAMAP-Rule" id="MF_00215"/>
    </source>
</evidence>
<name>COAA_STRGC</name>
<reference key="1">
    <citation type="journal article" date="2007" name="J. Bacteriol.">
        <title>Genome-wide transcriptional changes in Streptococcus gordonii in response to competence signaling peptide.</title>
        <authorList>
            <person name="Vickerman M.M."/>
            <person name="Iobst S."/>
            <person name="Jesionowski A.M."/>
            <person name="Gill S.R."/>
        </authorList>
    </citation>
    <scope>NUCLEOTIDE SEQUENCE [LARGE SCALE GENOMIC DNA]</scope>
    <source>
        <strain>Challis / ATCC 35105 / BCRC 15272 / CH1 / DL1 / V288</strain>
    </source>
</reference>
<feature type="chain" id="PRO_1000078064" description="Pantothenate kinase">
    <location>
        <begin position="1"/>
        <end position="306"/>
    </location>
</feature>
<feature type="binding site" evidence="1">
    <location>
        <begin position="91"/>
        <end position="98"/>
    </location>
    <ligand>
        <name>ATP</name>
        <dbReference type="ChEBI" id="CHEBI:30616"/>
    </ligand>
</feature>
<keyword id="KW-0067">ATP-binding</keyword>
<keyword id="KW-0173">Coenzyme A biosynthesis</keyword>
<keyword id="KW-0963">Cytoplasm</keyword>
<keyword id="KW-0418">Kinase</keyword>
<keyword id="KW-0547">Nucleotide-binding</keyword>
<keyword id="KW-1185">Reference proteome</keyword>
<keyword id="KW-0808">Transferase</keyword>
<comment type="catalytic activity">
    <reaction evidence="1">
        <text>(R)-pantothenate + ATP = (R)-4'-phosphopantothenate + ADP + H(+)</text>
        <dbReference type="Rhea" id="RHEA:16373"/>
        <dbReference type="ChEBI" id="CHEBI:10986"/>
        <dbReference type="ChEBI" id="CHEBI:15378"/>
        <dbReference type="ChEBI" id="CHEBI:29032"/>
        <dbReference type="ChEBI" id="CHEBI:30616"/>
        <dbReference type="ChEBI" id="CHEBI:456216"/>
        <dbReference type="EC" id="2.7.1.33"/>
    </reaction>
</comment>
<comment type="pathway">
    <text evidence="1">Cofactor biosynthesis; coenzyme A biosynthesis; CoA from (R)-pantothenate: step 1/5.</text>
</comment>
<comment type="subcellular location">
    <subcellularLocation>
        <location evidence="1">Cytoplasm</location>
    </subcellularLocation>
</comment>
<comment type="similarity">
    <text evidence="1">Belongs to the prokaryotic pantothenate kinase family.</text>
</comment>
<gene>
    <name evidence="1" type="primary">coaA</name>
    <name type="ordered locus">SGO_1077</name>
</gene>
<dbReference type="EC" id="2.7.1.33" evidence="1"/>
<dbReference type="EMBL" id="CP000725">
    <property type="protein sequence ID" value="ABV10950.1"/>
    <property type="molecule type" value="Genomic_DNA"/>
</dbReference>
<dbReference type="RefSeq" id="WP_012000489.1">
    <property type="nucleotide sequence ID" value="NC_009785.1"/>
</dbReference>
<dbReference type="SMR" id="A8AX56"/>
<dbReference type="STRING" id="467705.SGO_1077"/>
<dbReference type="KEGG" id="sgo:SGO_1077"/>
<dbReference type="eggNOG" id="COG1072">
    <property type="taxonomic scope" value="Bacteria"/>
</dbReference>
<dbReference type="HOGENOM" id="CLU_053818_1_1_9"/>
<dbReference type="UniPathway" id="UPA00241">
    <property type="reaction ID" value="UER00352"/>
</dbReference>
<dbReference type="Proteomes" id="UP000001131">
    <property type="component" value="Chromosome"/>
</dbReference>
<dbReference type="GO" id="GO:0005737">
    <property type="term" value="C:cytoplasm"/>
    <property type="evidence" value="ECO:0007669"/>
    <property type="project" value="UniProtKB-SubCell"/>
</dbReference>
<dbReference type="GO" id="GO:0005524">
    <property type="term" value="F:ATP binding"/>
    <property type="evidence" value="ECO:0007669"/>
    <property type="project" value="UniProtKB-UniRule"/>
</dbReference>
<dbReference type="GO" id="GO:0004594">
    <property type="term" value="F:pantothenate kinase activity"/>
    <property type="evidence" value="ECO:0007669"/>
    <property type="project" value="UniProtKB-UniRule"/>
</dbReference>
<dbReference type="GO" id="GO:0015937">
    <property type="term" value="P:coenzyme A biosynthetic process"/>
    <property type="evidence" value="ECO:0007669"/>
    <property type="project" value="UniProtKB-UniRule"/>
</dbReference>
<dbReference type="CDD" id="cd02025">
    <property type="entry name" value="PanK"/>
    <property type="match status" value="1"/>
</dbReference>
<dbReference type="Gene3D" id="3.40.50.300">
    <property type="entry name" value="P-loop containing nucleotide triphosphate hydrolases"/>
    <property type="match status" value="1"/>
</dbReference>
<dbReference type="HAMAP" id="MF_00215">
    <property type="entry name" value="Pantothen_kinase_1"/>
    <property type="match status" value="1"/>
</dbReference>
<dbReference type="InterPro" id="IPR027417">
    <property type="entry name" value="P-loop_NTPase"/>
</dbReference>
<dbReference type="InterPro" id="IPR004566">
    <property type="entry name" value="PanK"/>
</dbReference>
<dbReference type="InterPro" id="IPR006083">
    <property type="entry name" value="PRK/URK"/>
</dbReference>
<dbReference type="NCBIfam" id="TIGR00554">
    <property type="entry name" value="panK_bact"/>
    <property type="match status" value="1"/>
</dbReference>
<dbReference type="PANTHER" id="PTHR10285">
    <property type="entry name" value="URIDINE KINASE"/>
    <property type="match status" value="1"/>
</dbReference>
<dbReference type="Pfam" id="PF00485">
    <property type="entry name" value="PRK"/>
    <property type="match status" value="1"/>
</dbReference>
<dbReference type="PIRSF" id="PIRSF000545">
    <property type="entry name" value="Pantothenate_kin"/>
    <property type="match status" value="1"/>
</dbReference>
<dbReference type="SUPFAM" id="SSF52540">
    <property type="entry name" value="P-loop containing nucleoside triphosphate hydrolases"/>
    <property type="match status" value="1"/>
</dbReference>
<sequence>MTNEFLHFDRISRERWQQLHRKTTPPLTEEELNSIKSFNDEISLQDVMDIYLPLTNLIQIYKRAKEDLAFSKGIFLQKTLKKQPFIIGVSGSVAVGKSTTSRLLQILLSRTFENAKVELVTTDGFLYPNSVLQEHDLLNRKGFPESYNMELLLNFLDHLKNGQNYQVPVYSHEIYDIVPDQTQTIQVADFVIVEGINVFQNPQNERLYITDFFDFSIYVDAEVENIEKWYLDRFGKLLDLARRDSKNYYHRFTKEPVEDIMKMARNIWKSINLVNLKDYIEPTRNRAELILHKAHNHEIDEIYLKK</sequence>
<organism>
    <name type="scientific">Streptococcus gordonii (strain Challis / ATCC 35105 / BCRC 15272 / CH1 / DL1 / V288)</name>
    <dbReference type="NCBI Taxonomy" id="467705"/>
    <lineage>
        <taxon>Bacteria</taxon>
        <taxon>Bacillati</taxon>
        <taxon>Bacillota</taxon>
        <taxon>Bacilli</taxon>
        <taxon>Lactobacillales</taxon>
        <taxon>Streptococcaceae</taxon>
        <taxon>Streptococcus</taxon>
    </lineage>
</organism>
<proteinExistence type="inferred from homology"/>